<keyword id="KW-0574">Periplasm</keyword>
<keyword id="KW-1185">Reference proteome</keyword>
<keyword id="KW-0732">Signal</keyword>
<evidence type="ECO:0000255" key="1"/>
<evidence type="ECO:0000305" key="2"/>
<sequence>MKKFALATIFALATTSAFAGFNGNNSQGGFQQAAPAAISVKQALSAADNSMITLVGNITQQIDDDEFWFTDGTGQIKIEIKKRVWNGLNVDSKDKVKIYGKLDNEVFEKAELDVLRIEKAE</sequence>
<name>Y1709_HAEIN</name>
<proteinExistence type="evidence at protein level"/>
<dbReference type="EMBL" id="L42023">
    <property type="protein sequence ID" value="AAC23355.1"/>
    <property type="molecule type" value="Genomic_DNA"/>
</dbReference>
<dbReference type="PIR" id="F64040">
    <property type="entry name" value="F64040"/>
</dbReference>
<dbReference type="RefSeq" id="NP_439851.1">
    <property type="nucleotide sequence ID" value="NC_000907.1"/>
</dbReference>
<dbReference type="SMR" id="P44293"/>
<dbReference type="STRING" id="71421.HI_1709"/>
<dbReference type="EnsemblBacteria" id="AAC23355">
    <property type="protein sequence ID" value="AAC23355"/>
    <property type="gene ID" value="HI_1709"/>
</dbReference>
<dbReference type="KEGG" id="hin:HI_1709"/>
<dbReference type="PATRIC" id="fig|71421.8.peg.1788"/>
<dbReference type="eggNOG" id="COG3111">
    <property type="taxonomic scope" value="Bacteria"/>
</dbReference>
<dbReference type="HOGENOM" id="CLU_118907_1_0_6"/>
<dbReference type="OrthoDB" id="598245at2"/>
<dbReference type="PhylomeDB" id="P44293"/>
<dbReference type="BioCyc" id="HINF71421:G1GJ1-1725-MONOMER"/>
<dbReference type="Proteomes" id="UP000000579">
    <property type="component" value="Chromosome"/>
</dbReference>
<dbReference type="GO" id="GO:0042597">
    <property type="term" value="C:periplasmic space"/>
    <property type="evidence" value="ECO:0007669"/>
    <property type="project" value="UniProtKB-SubCell"/>
</dbReference>
<dbReference type="Gene3D" id="2.40.50.200">
    <property type="entry name" value="Bacterial OB-fold"/>
    <property type="match status" value="1"/>
</dbReference>
<dbReference type="InterPro" id="IPR036700">
    <property type="entry name" value="BOBF_sf"/>
</dbReference>
<dbReference type="InterPro" id="IPR005220">
    <property type="entry name" value="BOF"/>
</dbReference>
<dbReference type="InterPro" id="IPR052401">
    <property type="entry name" value="Ca-regulated_OB-fold"/>
</dbReference>
<dbReference type="InterPro" id="IPR016052">
    <property type="entry name" value="YgiW/YdeI"/>
</dbReference>
<dbReference type="NCBIfam" id="NF033674">
    <property type="entry name" value="stress_OB_fold"/>
    <property type="match status" value="1"/>
</dbReference>
<dbReference type="NCBIfam" id="TIGR00156">
    <property type="entry name" value="YgiW/YdeI family stress tolerance OB fold protein"/>
    <property type="match status" value="1"/>
</dbReference>
<dbReference type="PANTHER" id="PTHR36571">
    <property type="entry name" value="PROTEIN YGIW"/>
    <property type="match status" value="1"/>
</dbReference>
<dbReference type="PANTHER" id="PTHR36571:SF1">
    <property type="entry name" value="PROTEIN YGIW"/>
    <property type="match status" value="1"/>
</dbReference>
<dbReference type="Pfam" id="PF04076">
    <property type="entry name" value="BOF"/>
    <property type="match status" value="1"/>
</dbReference>
<dbReference type="SUPFAM" id="SSF101756">
    <property type="entry name" value="Hypothetical protein YgiW"/>
    <property type="match status" value="1"/>
</dbReference>
<gene>
    <name type="ordered locus">HI_1709</name>
</gene>
<protein>
    <recommendedName>
        <fullName>Uncharacterized protein HI_1709</fullName>
    </recommendedName>
</protein>
<organism>
    <name type="scientific">Haemophilus influenzae (strain ATCC 51907 / DSM 11121 / KW20 / Rd)</name>
    <dbReference type="NCBI Taxonomy" id="71421"/>
    <lineage>
        <taxon>Bacteria</taxon>
        <taxon>Pseudomonadati</taxon>
        <taxon>Pseudomonadota</taxon>
        <taxon>Gammaproteobacteria</taxon>
        <taxon>Pasteurellales</taxon>
        <taxon>Pasteurellaceae</taxon>
        <taxon>Haemophilus</taxon>
    </lineage>
</organism>
<accession>P44293</accession>
<reference key="1">
    <citation type="journal article" date="1995" name="Science">
        <title>Whole-genome random sequencing and assembly of Haemophilus influenzae Rd.</title>
        <authorList>
            <person name="Fleischmann R.D."/>
            <person name="Adams M.D."/>
            <person name="White O."/>
            <person name="Clayton R.A."/>
            <person name="Kirkness E.F."/>
            <person name="Kerlavage A.R."/>
            <person name="Bult C.J."/>
            <person name="Tomb J.-F."/>
            <person name="Dougherty B.A."/>
            <person name="Merrick J.M."/>
            <person name="McKenney K."/>
            <person name="Sutton G.G."/>
            <person name="FitzHugh W."/>
            <person name="Fields C.A."/>
            <person name="Gocayne J.D."/>
            <person name="Scott J.D."/>
            <person name="Shirley R."/>
            <person name="Liu L.-I."/>
            <person name="Glodek A."/>
            <person name="Kelley J.M."/>
            <person name="Weidman J.F."/>
            <person name="Phillips C.A."/>
            <person name="Spriggs T."/>
            <person name="Hedblom E."/>
            <person name="Cotton M.D."/>
            <person name="Utterback T.R."/>
            <person name="Hanna M.C."/>
            <person name="Nguyen D.T."/>
            <person name="Saudek D.M."/>
            <person name="Brandon R.C."/>
            <person name="Fine L.D."/>
            <person name="Fritchman J.L."/>
            <person name="Fuhrmann J.L."/>
            <person name="Geoghagen N.S.M."/>
            <person name="Gnehm C.L."/>
            <person name="McDonald L.A."/>
            <person name="Small K.V."/>
            <person name="Fraser C.M."/>
            <person name="Smith H.O."/>
            <person name="Venter J.C."/>
        </authorList>
    </citation>
    <scope>NUCLEOTIDE SEQUENCE [LARGE SCALE GENOMIC DNA]</scope>
    <source>
        <strain>ATCC 51907 / DSM 11121 / KW20 / Rd</strain>
    </source>
</reference>
<reference key="2">
    <citation type="journal article" date="2000" name="Electrophoresis">
        <title>Two-dimensional map of the proteome of Haemophilus influenzae.</title>
        <authorList>
            <person name="Langen H."/>
            <person name="Takacs B."/>
            <person name="Evers S."/>
            <person name="Berndt P."/>
            <person name="Lahm H.W."/>
            <person name="Wipf B."/>
            <person name="Gray C."/>
            <person name="Fountoulakis M."/>
        </authorList>
    </citation>
    <scope>IDENTIFICATION BY MASS SPECTROMETRY</scope>
    <source>
        <strain>ATCC 51907 / DSM 11121 / KW20 / Rd</strain>
    </source>
</reference>
<feature type="signal peptide" evidence="1">
    <location>
        <begin position="1"/>
        <end position="19"/>
    </location>
</feature>
<feature type="chain" id="PRO_0000013903" description="Uncharacterized protein HI_1709">
    <location>
        <begin position="20"/>
        <end position="121"/>
    </location>
</feature>
<comment type="subcellular location">
    <subcellularLocation>
        <location evidence="2">Periplasm</location>
    </subcellularLocation>
</comment>
<comment type="similarity">
    <text evidence="2">To E.coli YgiW.</text>
</comment>